<keyword id="KW-0027">Amidation</keyword>
<keyword id="KW-0903">Direct protein sequencing</keyword>
<keyword id="KW-0527">Neuropeptide</keyword>
<keyword id="KW-0873">Pyrrolidone carboxylic acid</keyword>
<keyword id="KW-0964">Secreted</keyword>
<dbReference type="GO" id="GO:0005576">
    <property type="term" value="C:extracellular region"/>
    <property type="evidence" value="ECO:0007669"/>
    <property type="project" value="UniProtKB-SubCell"/>
</dbReference>
<dbReference type="GO" id="GO:0007218">
    <property type="term" value="P:neuropeptide signaling pathway"/>
    <property type="evidence" value="ECO:0007669"/>
    <property type="project" value="UniProtKB-KW"/>
</dbReference>
<reference evidence="5" key="1">
    <citation type="journal article" date="2012" name="Syst. Biol.">
        <title>Peptidomics-based phylogeny and biogeography of Mantophasmatodea (Hexapoda).</title>
        <authorList>
            <person name="Predel R."/>
            <person name="Neupert S."/>
            <person name="Huetteroth W."/>
            <person name="Kahnt J."/>
            <person name="Waidelich D."/>
            <person name="Roth S."/>
        </authorList>
    </citation>
    <scope>PROTEIN SEQUENCE</scope>
    <scope>PYROGLUTAMATE FORMATION AT GLN-1</scope>
    <scope>AMIDATION AT ASN-11</scope>
    <source>
        <tissue evidence="3">Corpora cardiaca</tissue>
    </source>
</reference>
<comment type="function">
    <text evidence="1">Cardioactive peptide. Corazonin is probably involved in the physiological regulation of the heart beat (By similarity).</text>
</comment>
<comment type="subcellular location">
    <subcellularLocation>
        <location evidence="6">Secreted</location>
    </subcellularLocation>
</comment>
<comment type="similarity">
    <text evidence="2">Belongs to the corazonin family.</text>
</comment>
<feature type="peptide" id="PRO_0000420771" description="Corazonin" evidence="3">
    <location>
        <begin position="1"/>
        <end position="11"/>
    </location>
</feature>
<feature type="modified residue" description="Pyrrolidone carboxylic acid" evidence="3">
    <location>
        <position position="1"/>
    </location>
</feature>
<feature type="modified residue" description="Asparagine amide" evidence="3">
    <location>
        <position position="11"/>
    </location>
</feature>
<sequence length="11" mass="1387">QTFQYSRGWTN</sequence>
<proteinExistence type="evidence at protein level"/>
<evidence type="ECO:0000250" key="1">
    <source>
        <dbReference type="UniProtKB" id="Q26377"/>
    </source>
</evidence>
<evidence type="ECO:0000255" key="2"/>
<evidence type="ECO:0000269" key="3">
    <source>
    </source>
</evidence>
<evidence type="ECO:0000303" key="4">
    <source>
    </source>
</evidence>
<evidence type="ECO:0000305" key="5"/>
<evidence type="ECO:0000305" key="6">
    <source>
    </source>
</evidence>
<protein>
    <recommendedName>
        <fullName evidence="4">Corazonin</fullName>
    </recommendedName>
</protein>
<accession>B0M3E3</accession>
<organism>
    <name type="scientific">Mantophasma kudubergense</name>
    <name type="common">Gladiator</name>
    <name type="synonym">Heel-walker</name>
    <dbReference type="NCBI Taxonomy" id="1037657"/>
    <lineage>
        <taxon>Eukaryota</taxon>
        <taxon>Metazoa</taxon>
        <taxon>Ecdysozoa</taxon>
        <taxon>Arthropoda</taxon>
        <taxon>Hexapoda</taxon>
        <taxon>Insecta</taxon>
        <taxon>Pterygota</taxon>
        <taxon>Neoptera</taxon>
        <taxon>Polyneoptera</taxon>
        <taxon>Mantophasmatodea</taxon>
        <taxon>Mantophasmatidae</taxon>
        <taxon>Mantophasma</taxon>
    </lineage>
</organism>
<name>CORZ_MANKU</name>